<name>RL27_PAEAT</name>
<gene>
    <name evidence="1" type="primary">rpmA</name>
    <name type="ordered locus">AAur_2366</name>
</gene>
<comment type="similarity">
    <text evidence="1">Belongs to the bacterial ribosomal protein bL27 family.</text>
</comment>
<evidence type="ECO:0000255" key="1">
    <source>
        <dbReference type="HAMAP-Rule" id="MF_00539"/>
    </source>
</evidence>
<evidence type="ECO:0000305" key="2"/>
<reference key="1">
    <citation type="journal article" date="2006" name="PLoS Genet.">
        <title>Secrets of soil survival revealed by the genome sequence of Arthrobacter aurescens TC1.</title>
        <authorList>
            <person name="Mongodin E.F."/>
            <person name="Shapir N."/>
            <person name="Daugherty S.C."/>
            <person name="DeBoy R.T."/>
            <person name="Emerson J.B."/>
            <person name="Shvartzbeyn A."/>
            <person name="Radune D."/>
            <person name="Vamathevan J."/>
            <person name="Riggs F."/>
            <person name="Grinberg V."/>
            <person name="Khouri H.M."/>
            <person name="Wackett L.P."/>
            <person name="Nelson K.E."/>
            <person name="Sadowsky M.J."/>
        </authorList>
    </citation>
    <scope>NUCLEOTIDE SEQUENCE [LARGE SCALE GENOMIC DNA]</scope>
    <source>
        <strain>TC1</strain>
    </source>
</reference>
<dbReference type="EMBL" id="CP000474">
    <property type="protein sequence ID" value="ABM07046.1"/>
    <property type="molecule type" value="Genomic_DNA"/>
</dbReference>
<dbReference type="RefSeq" id="WP_003803426.1">
    <property type="nucleotide sequence ID" value="NC_008711.1"/>
</dbReference>
<dbReference type="SMR" id="A1R788"/>
<dbReference type="STRING" id="290340.AAur_2366"/>
<dbReference type="GeneID" id="97301218"/>
<dbReference type="KEGG" id="aau:AAur_2366"/>
<dbReference type="eggNOG" id="COG0211">
    <property type="taxonomic scope" value="Bacteria"/>
</dbReference>
<dbReference type="HOGENOM" id="CLU_095424_4_0_11"/>
<dbReference type="OrthoDB" id="9803474at2"/>
<dbReference type="Proteomes" id="UP000000637">
    <property type="component" value="Chromosome"/>
</dbReference>
<dbReference type="GO" id="GO:0022625">
    <property type="term" value="C:cytosolic large ribosomal subunit"/>
    <property type="evidence" value="ECO:0007669"/>
    <property type="project" value="TreeGrafter"/>
</dbReference>
<dbReference type="GO" id="GO:0003735">
    <property type="term" value="F:structural constituent of ribosome"/>
    <property type="evidence" value="ECO:0007669"/>
    <property type="project" value="InterPro"/>
</dbReference>
<dbReference type="GO" id="GO:0006412">
    <property type="term" value="P:translation"/>
    <property type="evidence" value="ECO:0007669"/>
    <property type="project" value="UniProtKB-UniRule"/>
</dbReference>
<dbReference type="FunFam" id="2.40.50.100:FF:000020">
    <property type="entry name" value="50S ribosomal protein L27"/>
    <property type="match status" value="1"/>
</dbReference>
<dbReference type="Gene3D" id="2.40.50.100">
    <property type="match status" value="1"/>
</dbReference>
<dbReference type="HAMAP" id="MF_00539">
    <property type="entry name" value="Ribosomal_bL27"/>
    <property type="match status" value="1"/>
</dbReference>
<dbReference type="InterPro" id="IPR001684">
    <property type="entry name" value="Ribosomal_bL27"/>
</dbReference>
<dbReference type="InterPro" id="IPR018261">
    <property type="entry name" value="Ribosomal_bL27_CS"/>
</dbReference>
<dbReference type="NCBIfam" id="TIGR00062">
    <property type="entry name" value="L27"/>
    <property type="match status" value="1"/>
</dbReference>
<dbReference type="PANTHER" id="PTHR15893:SF0">
    <property type="entry name" value="LARGE RIBOSOMAL SUBUNIT PROTEIN BL27M"/>
    <property type="match status" value="1"/>
</dbReference>
<dbReference type="PANTHER" id="PTHR15893">
    <property type="entry name" value="RIBOSOMAL PROTEIN L27"/>
    <property type="match status" value="1"/>
</dbReference>
<dbReference type="Pfam" id="PF01016">
    <property type="entry name" value="Ribosomal_L27"/>
    <property type="match status" value="1"/>
</dbReference>
<dbReference type="PRINTS" id="PR00063">
    <property type="entry name" value="RIBOSOMALL27"/>
</dbReference>
<dbReference type="SUPFAM" id="SSF110324">
    <property type="entry name" value="Ribosomal L27 protein-like"/>
    <property type="match status" value="1"/>
</dbReference>
<dbReference type="PROSITE" id="PS00831">
    <property type="entry name" value="RIBOSOMAL_L27"/>
    <property type="match status" value="1"/>
</dbReference>
<proteinExistence type="inferred from homology"/>
<accession>A1R788</accession>
<protein>
    <recommendedName>
        <fullName evidence="1">Large ribosomal subunit protein bL27</fullName>
    </recommendedName>
    <alternativeName>
        <fullName evidence="2">50S ribosomal protein L27</fullName>
    </alternativeName>
</protein>
<sequence length="87" mass="9047">MAHKKGASSTRNGRDSNAQYLGVKRFGGQVVSAGEIIVRQRGTHFHPGAGVGRGGDDTLFALQAGAVEFGTRRGRRVVNIVAAAAAE</sequence>
<feature type="chain" id="PRO_1000017407" description="Large ribosomal subunit protein bL27">
    <location>
        <begin position="1"/>
        <end position="87"/>
    </location>
</feature>
<organism>
    <name type="scientific">Paenarthrobacter aurescens (strain TC1)</name>
    <dbReference type="NCBI Taxonomy" id="290340"/>
    <lineage>
        <taxon>Bacteria</taxon>
        <taxon>Bacillati</taxon>
        <taxon>Actinomycetota</taxon>
        <taxon>Actinomycetes</taxon>
        <taxon>Micrococcales</taxon>
        <taxon>Micrococcaceae</taxon>
        <taxon>Paenarthrobacter</taxon>
    </lineage>
</organism>
<keyword id="KW-0687">Ribonucleoprotein</keyword>
<keyword id="KW-0689">Ribosomal protein</keyword>